<feature type="chain" id="PRO_1000044765" description="Uronate isomerase">
    <location>
        <begin position="1"/>
        <end position="470"/>
    </location>
</feature>
<accession>Q0TD14</accession>
<gene>
    <name evidence="1" type="primary">uxaC</name>
    <name type="ordered locus">ECP_3183</name>
</gene>
<evidence type="ECO:0000255" key="1">
    <source>
        <dbReference type="HAMAP-Rule" id="MF_00675"/>
    </source>
</evidence>
<proteinExistence type="inferred from homology"/>
<name>UXAC_ECOL5</name>
<dbReference type="EC" id="5.3.1.12" evidence="1"/>
<dbReference type="EMBL" id="CP000247">
    <property type="protein sequence ID" value="ABG71165.1"/>
    <property type="molecule type" value="Genomic_DNA"/>
</dbReference>
<dbReference type="RefSeq" id="WP_000187442.1">
    <property type="nucleotide sequence ID" value="NC_008253.1"/>
</dbReference>
<dbReference type="SMR" id="Q0TD14"/>
<dbReference type="GeneID" id="93778895"/>
<dbReference type="KEGG" id="ecp:ECP_3183"/>
<dbReference type="HOGENOM" id="CLU_044465_1_0_6"/>
<dbReference type="UniPathway" id="UPA00246"/>
<dbReference type="Proteomes" id="UP000009182">
    <property type="component" value="Chromosome"/>
</dbReference>
<dbReference type="GO" id="GO:0008880">
    <property type="term" value="F:glucuronate isomerase activity"/>
    <property type="evidence" value="ECO:0007669"/>
    <property type="project" value="UniProtKB-UniRule"/>
</dbReference>
<dbReference type="GO" id="GO:0019698">
    <property type="term" value="P:D-galacturonate catabolic process"/>
    <property type="evidence" value="ECO:0007669"/>
    <property type="project" value="TreeGrafter"/>
</dbReference>
<dbReference type="GO" id="GO:0042840">
    <property type="term" value="P:D-glucuronate catabolic process"/>
    <property type="evidence" value="ECO:0007669"/>
    <property type="project" value="TreeGrafter"/>
</dbReference>
<dbReference type="FunFam" id="1.10.2020.10:FF:000001">
    <property type="entry name" value="Uronate isomerase"/>
    <property type="match status" value="1"/>
</dbReference>
<dbReference type="Gene3D" id="3.20.20.140">
    <property type="entry name" value="Metal-dependent hydrolases"/>
    <property type="match status" value="1"/>
</dbReference>
<dbReference type="Gene3D" id="1.10.2020.10">
    <property type="entry name" value="uronate isomerase, domain 2, chain A"/>
    <property type="match status" value="1"/>
</dbReference>
<dbReference type="HAMAP" id="MF_00675">
    <property type="entry name" value="UxaC"/>
    <property type="match status" value="1"/>
</dbReference>
<dbReference type="InterPro" id="IPR032466">
    <property type="entry name" value="Metal_Hydrolase"/>
</dbReference>
<dbReference type="InterPro" id="IPR003766">
    <property type="entry name" value="Uronate_isomerase"/>
</dbReference>
<dbReference type="NCBIfam" id="NF002794">
    <property type="entry name" value="PRK02925.1"/>
    <property type="match status" value="1"/>
</dbReference>
<dbReference type="PANTHER" id="PTHR30068">
    <property type="entry name" value="URONATE ISOMERASE"/>
    <property type="match status" value="1"/>
</dbReference>
<dbReference type="PANTHER" id="PTHR30068:SF4">
    <property type="entry name" value="URONATE ISOMERASE"/>
    <property type="match status" value="1"/>
</dbReference>
<dbReference type="Pfam" id="PF02614">
    <property type="entry name" value="UxaC"/>
    <property type="match status" value="1"/>
</dbReference>
<dbReference type="SUPFAM" id="SSF51556">
    <property type="entry name" value="Metallo-dependent hydrolases"/>
    <property type="match status" value="1"/>
</dbReference>
<keyword id="KW-0413">Isomerase</keyword>
<organism>
    <name type="scientific">Escherichia coli O6:K15:H31 (strain 536 / UPEC)</name>
    <dbReference type="NCBI Taxonomy" id="362663"/>
    <lineage>
        <taxon>Bacteria</taxon>
        <taxon>Pseudomonadati</taxon>
        <taxon>Pseudomonadota</taxon>
        <taxon>Gammaproteobacteria</taxon>
        <taxon>Enterobacterales</taxon>
        <taxon>Enterobacteriaceae</taxon>
        <taxon>Escherichia</taxon>
    </lineage>
</organism>
<sequence length="470" mass="53987">MTPFMTEDFLLDTEFARRLYHDYAKDQPIFDYHCHLPPQQIAEDYRFKNLYDIWLKGDHYKWRAMRTNGVAERLCTGDASDREKFDAWAATVPHTIGNPLYHWTHLELRRPFGITGKLLSPSTADEIWNECNELLAQDNFSARGIMQQMNVKMVGTTDDPIDSLEHHAEIAKDGSFTIKVLPSWRPDKAFNIEQATFNDYMAKLGEVSDTDIRRFADLQTALTKRLDHFAAHGCKVSDHALDVVMFAEANEAELDSILARRLAGETLSEHEVAQFKTAVLVFLGAEYARRGWVQQYHIGALRNNNLRQFKLLGPDVGFDSINDRPMAEELSKLLSKQNEENLLPKTILYCLNPRDNEVLGTMIGNFQGEGMPGKMQFGSGWWFNDQKDGMERQMTQLAQLGLLSRFVGMLTDSRSFLSYTRHEYFRRILCQMIGRWVEAGEAPADINLLGEMVKNICFNNARDYFAIELN</sequence>
<protein>
    <recommendedName>
        <fullName evidence="1">Uronate isomerase</fullName>
        <ecNumber evidence="1">5.3.1.12</ecNumber>
    </recommendedName>
    <alternativeName>
        <fullName evidence="1">Glucuronate isomerase</fullName>
    </alternativeName>
    <alternativeName>
        <fullName evidence="1">Uronic isomerase</fullName>
    </alternativeName>
</protein>
<comment type="catalytic activity">
    <reaction evidence="1">
        <text>D-glucuronate = D-fructuronate</text>
        <dbReference type="Rhea" id="RHEA:13049"/>
        <dbReference type="ChEBI" id="CHEBI:58720"/>
        <dbReference type="ChEBI" id="CHEBI:59863"/>
        <dbReference type="EC" id="5.3.1.12"/>
    </reaction>
</comment>
<comment type="catalytic activity">
    <reaction evidence="1">
        <text>aldehydo-D-galacturonate = keto-D-tagaturonate</text>
        <dbReference type="Rhea" id="RHEA:27702"/>
        <dbReference type="ChEBI" id="CHEBI:12952"/>
        <dbReference type="ChEBI" id="CHEBI:17886"/>
        <dbReference type="EC" id="5.3.1.12"/>
    </reaction>
</comment>
<comment type="pathway">
    <text evidence="1">Carbohydrate metabolism; pentose and glucuronate interconversion.</text>
</comment>
<comment type="similarity">
    <text evidence="1">Belongs to the metallo-dependent hydrolases superfamily. Uronate isomerase family.</text>
</comment>
<reference key="1">
    <citation type="journal article" date="2006" name="Mol. Microbiol.">
        <title>Role of pathogenicity island-associated integrases in the genome plasticity of uropathogenic Escherichia coli strain 536.</title>
        <authorList>
            <person name="Hochhut B."/>
            <person name="Wilde C."/>
            <person name="Balling G."/>
            <person name="Middendorf B."/>
            <person name="Dobrindt U."/>
            <person name="Brzuszkiewicz E."/>
            <person name="Gottschalk G."/>
            <person name="Carniel E."/>
            <person name="Hacker J."/>
        </authorList>
    </citation>
    <scope>NUCLEOTIDE SEQUENCE [LARGE SCALE GENOMIC DNA]</scope>
    <source>
        <strain>536 / UPEC</strain>
    </source>
</reference>